<comment type="function">
    <text evidence="1">Transfers a GMP moiety from GTP to Mo-molybdopterin (Mo-MPT) cofactor (Moco or molybdenum cofactor) to form Mo-molybdopterin guanine dinucleotide (Mo-MGD) cofactor.</text>
</comment>
<comment type="catalytic activity">
    <reaction evidence="1">
        <text>Mo-molybdopterin + GTP + H(+) = Mo-molybdopterin guanine dinucleotide + diphosphate</text>
        <dbReference type="Rhea" id="RHEA:34243"/>
        <dbReference type="ChEBI" id="CHEBI:15378"/>
        <dbReference type="ChEBI" id="CHEBI:33019"/>
        <dbReference type="ChEBI" id="CHEBI:37565"/>
        <dbReference type="ChEBI" id="CHEBI:71302"/>
        <dbReference type="ChEBI" id="CHEBI:71310"/>
        <dbReference type="EC" id="2.7.7.77"/>
    </reaction>
</comment>
<comment type="cofactor">
    <cofactor evidence="1">
        <name>Mg(2+)</name>
        <dbReference type="ChEBI" id="CHEBI:18420"/>
    </cofactor>
</comment>
<comment type="subunit">
    <text evidence="1">Monomer.</text>
</comment>
<comment type="subcellular location">
    <subcellularLocation>
        <location evidence="1">Cytoplasm</location>
    </subcellularLocation>
</comment>
<comment type="domain">
    <text evidence="1">The N-terminal domain determines nucleotide recognition and specific binding, while the C-terminal domain determines the specific binding to the target protein.</text>
</comment>
<comment type="similarity">
    <text evidence="1">Belongs to the MobA family.</text>
</comment>
<accession>B0CLS9</accession>
<gene>
    <name evidence="1" type="primary">mobA</name>
    <name type="ordered locus">BSUIS_A0997</name>
</gene>
<evidence type="ECO:0000255" key="1">
    <source>
        <dbReference type="HAMAP-Rule" id="MF_00316"/>
    </source>
</evidence>
<reference key="1">
    <citation type="submission" date="2007-12" db="EMBL/GenBank/DDBJ databases">
        <title>Brucella suis ATCC 23445 whole genome shotgun sequencing project.</title>
        <authorList>
            <person name="Setubal J.C."/>
            <person name="Bowns C."/>
            <person name="Boyle S."/>
            <person name="Crasta O.R."/>
            <person name="Czar M.J."/>
            <person name="Dharmanolla C."/>
            <person name="Gillespie J.J."/>
            <person name="Kenyon R.W."/>
            <person name="Lu J."/>
            <person name="Mane S."/>
            <person name="Mohapatra S."/>
            <person name="Nagrani S."/>
            <person name="Purkayastha A."/>
            <person name="Rajasimha H.K."/>
            <person name="Shallom J.M."/>
            <person name="Shallom S."/>
            <person name="Shukla M."/>
            <person name="Snyder E.E."/>
            <person name="Sobral B.W."/>
            <person name="Wattam A.R."/>
            <person name="Will R."/>
            <person name="Williams K."/>
            <person name="Yoo H."/>
            <person name="Bruce D."/>
            <person name="Detter C."/>
            <person name="Munk C."/>
            <person name="Brettin T.S."/>
        </authorList>
    </citation>
    <scope>NUCLEOTIDE SEQUENCE [LARGE SCALE GENOMIC DNA]</scope>
    <source>
        <strain>ATCC 23445 / NCTC 10510</strain>
    </source>
</reference>
<sequence>MRAGQPKITGAKITGAIIAGGQSSRMQAGGVSGDKFLQPLGSAPVIAHVIARLQPQVDTLFINSKGDLSRFAAFGLPAVKDIAMNHGGPLVGLLTCLAHASPCRLLLTSAADTPFLPCDLASNLIRKQAETGARIILACSNERVHPIVGLWHTDLVPDLEKWLQHAEKASIFWFAKHIGFEVVNIPLAHAPRLAESYDPFFNINLPDDLLKAREINEALQA</sequence>
<keyword id="KW-0963">Cytoplasm</keyword>
<keyword id="KW-0342">GTP-binding</keyword>
<keyword id="KW-0460">Magnesium</keyword>
<keyword id="KW-0479">Metal-binding</keyword>
<keyword id="KW-0501">Molybdenum cofactor biosynthesis</keyword>
<keyword id="KW-0547">Nucleotide-binding</keyword>
<keyword id="KW-0808">Transferase</keyword>
<name>MOBA_BRUSI</name>
<organism>
    <name type="scientific">Brucella suis (strain ATCC 23445 / NCTC 10510)</name>
    <dbReference type="NCBI Taxonomy" id="470137"/>
    <lineage>
        <taxon>Bacteria</taxon>
        <taxon>Pseudomonadati</taxon>
        <taxon>Pseudomonadota</taxon>
        <taxon>Alphaproteobacteria</taxon>
        <taxon>Hyphomicrobiales</taxon>
        <taxon>Brucellaceae</taxon>
        <taxon>Brucella/Ochrobactrum group</taxon>
        <taxon>Brucella</taxon>
    </lineage>
</organism>
<protein>
    <recommendedName>
        <fullName evidence="1">Molybdenum cofactor guanylyltransferase</fullName>
        <shortName evidence="1">MoCo guanylyltransferase</shortName>
        <ecNumber evidence="1">2.7.7.77</ecNumber>
    </recommendedName>
    <alternativeName>
        <fullName evidence="1">GTP:molybdopterin guanylyltransferase</fullName>
    </alternativeName>
    <alternativeName>
        <fullName evidence="1">Mo-MPT guanylyltransferase</fullName>
    </alternativeName>
    <alternativeName>
        <fullName evidence="1">Molybdopterin guanylyltransferase</fullName>
    </alternativeName>
    <alternativeName>
        <fullName evidence="1">Molybdopterin-guanine dinucleotide synthase</fullName>
        <shortName evidence="1">MGD synthase</shortName>
    </alternativeName>
</protein>
<feature type="chain" id="PRO_1000079107" description="Molybdenum cofactor guanylyltransferase">
    <location>
        <begin position="1"/>
        <end position="221"/>
    </location>
</feature>
<feature type="binding site" evidence="1">
    <location>
        <begin position="18"/>
        <end position="20"/>
    </location>
    <ligand>
        <name>GTP</name>
        <dbReference type="ChEBI" id="CHEBI:37565"/>
    </ligand>
</feature>
<feature type="binding site" evidence="1">
    <location>
        <position position="35"/>
    </location>
    <ligand>
        <name>GTP</name>
        <dbReference type="ChEBI" id="CHEBI:37565"/>
    </ligand>
</feature>
<feature type="binding site" evidence="1">
    <location>
        <position position="63"/>
    </location>
    <ligand>
        <name>GTP</name>
        <dbReference type="ChEBI" id="CHEBI:37565"/>
    </ligand>
</feature>
<feature type="binding site" evidence="1">
    <location>
        <position position="81"/>
    </location>
    <ligand>
        <name>GTP</name>
        <dbReference type="ChEBI" id="CHEBI:37565"/>
    </ligand>
</feature>
<feature type="binding site" evidence="1">
    <location>
        <position position="112"/>
    </location>
    <ligand>
        <name>GTP</name>
        <dbReference type="ChEBI" id="CHEBI:37565"/>
    </ligand>
</feature>
<feature type="binding site" evidence="1">
    <location>
        <position position="112"/>
    </location>
    <ligand>
        <name>Mg(2+)</name>
        <dbReference type="ChEBI" id="CHEBI:18420"/>
    </ligand>
</feature>
<proteinExistence type="inferred from homology"/>
<dbReference type="EC" id="2.7.7.77" evidence="1"/>
<dbReference type="EMBL" id="CP000911">
    <property type="protein sequence ID" value="ABY38059.1"/>
    <property type="molecule type" value="Genomic_DNA"/>
</dbReference>
<dbReference type="RefSeq" id="WP_002964077.1">
    <property type="nucleotide sequence ID" value="NC_010169.1"/>
</dbReference>
<dbReference type="SMR" id="B0CLS9"/>
<dbReference type="KEGG" id="bmt:BSUIS_A0997"/>
<dbReference type="HOGENOM" id="CLU_055597_5_0_5"/>
<dbReference type="Proteomes" id="UP000008545">
    <property type="component" value="Chromosome I"/>
</dbReference>
<dbReference type="GO" id="GO:0005737">
    <property type="term" value="C:cytoplasm"/>
    <property type="evidence" value="ECO:0007669"/>
    <property type="project" value="UniProtKB-SubCell"/>
</dbReference>
<dbReference type="GO" id="GO:0005525">
    <property type="term" value="F:GTP binding"/>
    <property type="evidence" value="ECO:0007669"/>
    <property type="project" value="UniProtKB-UniRule"/>
</dbReference>
<dbReference type="GO" id="GO:0046872">
    <property type="term" value="F:metal ion binding"/>
    <property type="evidence" value="ECO:0007669"/>
    <property type="project" value="UniProtKB-KW"/>
</dbReference>
<dbReference type="GO" id="GO:0061603">
    <property type="term" value="F:molybdenum cofactor guanylyltransferase activity"/>
    <property type="evidence" value="ECO:0007669"/>
    <property type="project" value="UniProtKB-EC"/>
</dbReference>
<dbReference type="GO" id="GO:1902758">
    <property type="term" value="P:bis(molybdopterin guanine dinucleotide)molybdenum biosynthetic process"/>
    <property type="evidence" value="ECO:0007669"/>
    <property type="project" value="TreeGrafter"/>
</dbReference>
<dbReference type="CDD" id="cd02503">
    <property type="entry name" value="MobA"/>
    <property type="match status" value="1"/>
</dbReference>
<dbReference type="Gene3D" id="3.90.550.10">
    <property type="entry name" value="Spore Coat Polysaccharide Biosynthesis Protein SpsA, Chain A"/>
    <property type="match status" value="1"/>
</dbReference>
<dbReference type="HAMAP" id="MF_00316">
    <property type="entry name" value="MobA"/>
    <property type="match status" value="1"/>
</dbReference>
<dbReference type="InterPro" id="IPR025877">
    <property type="entry name" value="MobA-like_NTP_Trfase"/>
</dbReference>
<dbReference type="InterPro" id="IPR013482">
    <property type="entry name" value="Molybde_CF_guanTrfase"/>
</dbReference>
<dbReference type="InterPro" id="IPR029044">
    <property type="entry name" value="Nucleotide-diphossugar_trans"/>
</dbReference>
<dbReference type="PANTHER" id="PTHR19136">
    <property type="entry name" value="MOLYBDENUM COFACTOR GUANYLYLTRANSFERASE"/>
    <property type="match status" value="1"/>
</dbReference>
<dbReference type="PANTHER" id="PTHR19136:SF81">
    <property type="entry name" value="MOLYBDENUM COFACTOR GUANYLYLTRANSFERASE"/>
    <property type="match status" value="1"/>
</dbReference>
<dbReference type="Pfam" id="PF12804">
    <property type="entry name" value="NTP_transf_3"/>
    <property type="match status" value="1"/>
</dbReference>
<dbReference type="SUPFAM" id="SSF53448">
    <property type="entry name" value="Nucleotide-diphospho-sugar transferases"/>
    <property type="match status" value="1"/>
</dbReference>